<proteinExistence type="evidence at transcript level"/>
<comment type="function">
    <text evidence="1 2">E3 ubiquitin-protein ligase that catalyzes monoubiquitination of 40S ribosomal proteins RPS2/us5 and RPS3/us3 in response to ribosome stalling. Part of a ribosome quality control that takes place when ribosomes have stalled during translation initiation (iRQC): RNF10 acts by mediating monoubiquitination of RPS2/us5 and RPS3/us3, promoting their degradation by the proteasome. Also promotes ubiquitination of 40S ribosomal proteins in response to ribosome stalling during translation elongation. The action of RNF10 in iRQC is counteracted by USP10 (By similarity). May also act as a transcriptional factor involved in the regulation of MAG (Myelin-associated glycoprotein) expression. Acts as a regulator of Schwann cell differentiation and myelination (By similarity).</text>
</comment>
<comment type="catalytic activity">
    <reaction evidence="2">
        <text>S-ubiquitinyl-[E2 ubiquitin-conjugating enzyme]-L-cysteine + [acceptor protein]-L-lysine = [E2 ubiquitin-conjugating enzyme]-L-cysteine + N(6)-ubiquitinyl-[acceptor protein]-L-lysine.</text>
        <dbReference type="EC" id="2.3.2.27"/>
    </reaction>
</comment>
<comment type="pathway">
    <text evidence="2">Protein modification; protein ubiquitination.</text>
</comment>
<comment type="subunit">
    <text evidence="2">Interacts with MEOX2.</text>
</comment>
<comment type="subcellular location">
    <subcellularLocation>
        <location evidence="2">Cytoplasm</location>
    </subcellularLocation>
    <subcellularLocation>
        <location evidence="1">Nucleus</location>
    </subcellularLocation>
</comment>
<comment type="alternative products">
    <event type="alternative splicing"/>
    <isoform>
        <id>Q3UIW5-1</id>
        <name>1</name>
        <sequence type="displayed"/>
    </isoform>
    <isoform>
        <id>Q3UIW5-2</id>
        <name>2</name>
        <sequence type="described" ref="VSP_021479 VSP_021480 VSP_021481"/>
    </isoform>
</comment>
<comment type="similarity">
    <text evidence="8">Belongs to the RNF10 family.</text>
</comment>
<comment type="sequence caution" evidence="8">
    <conflict type="erroneous initiation">
        <sequence resource="EMBL-CDS" id="BAC97916"/>
    </conflict>
</comment>
<gene>
    <name evidence="5 9" type="primary">Rnf10</name>
    <name evidence="6" type="synonym">Kiaa0262</name>
    <name type="synonym">Rie2</name>
    <name type="synonym">Sid2705</name>
</gene>
<reference key="1">
    <citation type="journal article" date="2000" name="J. Hum. Genet.">
        <title>cDNA cloning, expression profile, and genomic structure of human and mouse RNF10/Rnf 10 genes, encoding a novel RING finger protein.</title>
        <authorList>
            <person name="Seki N."/>
            <person name="Hattori A."/>
            <person name="Sugano S."/>
            <person name="Muramatsu M."/>
            <person name="Saito T."/>
        </authorList>
    </citation>
    <scope>NUCLEOTIDE SEQUENCE [MRNA] (ISOFORM 1)</scope>
</reference>
<reference key="2">
    <citation type="journal article" date="2003" name="DNA Res.">
        <title>Prediction of the coding sequences of mouse homologues of KIAA gene: III. The complete nucleotide sequences of 500 mouse KIAA-homologous cDNAs identified by screening of terminal sequences of cDNA clones randomly sampled from size-fractionated libraries.</title>
        <authorList>
            <person name="Okazaki N."/>
            <person name="Kikuno R."/>
            <person name="Ohara R."/>
            <person name="Inamoto S."/>
            <person name="Koseki H."/>
            <person name="Hiraoka S."/>
            <person name="Saga Y."/>
            <person name="Nagase T."/>
            <person name="Ohara O."/>
            <person name="Koga H."/>
        </authorList>
    </citation>
    <scope>NUCLEOTIDE SEQUENCE [LARGE SCALE MRNA] (ISOFORM 1)</scope>
    <source>
        <tissue>Embryonic tail</tissue>
    </source>
</reference>
<reference key="3">
    <citation type="journal article" date="2005" name="Science">
        <title>The transcriptional landscape of the mammalian genome.</title>
        <authorList>
            <person name="Carninci P."/>
            <person name="Kasukawa T."/>
            <person name="Katayama S."/>
            <person name="Gough J."/>
            <person name="Frith M.C."/>
            <person name="Maeda N."/>
            <person name="Oyama R."/>
            <person name="Ravasi T."/>
            <person name="Lenhard B."/>
            <person name="Wells C."/>
            <person name="Kodzius R."/>
            <person name="Shimokawa K."/>
            <person name="Bajic V.B."/>
            <person name="Brenner S.E."/>
            <person name="Batalov S."/>
            <person name="Forrest A.R."/>
            <person name="Zavolan M."/>
            <person name="Davis M.J."/>
            <person name="Wilming L.G."/>
            <person name="Aidinis V."/>
            <person name="Allen J.E."/>
            <person name="Ambesi-Impiombato A."/>
            <person name="Apweiler R."/>
            <person name="Aturaliya R.N."/>
            <person name="Bailey T.L."/>
            <person name="Bansal M."/>
            <person name="Baxter L."/>
            <person name="Beisel K.W."/>
            <person name="Bersano T."/>
            <person name="Bono H."/>
            <person name="Chalk A.M."/>
            <person name="Chiu K.P."/>
            <person name="Choudhary V."/>
            <person name="Christoffels A."/>
            <person name="Clutterbuck D.R."/>
            <person name="Crowe M.L."/>
            <person name="Dalla E."/>
            <person name="Dalrymple B.P."/>
            <person name="de Bono B."/>
            <person name="Della Gatta G."/>
            <person name="di Bernardo D."/>
            <person name="Down T."/>
            <person name="Engstrom P."/>
            <person name="Fagiolini M."/>
            <person name="Faulkner G."/>
            <person name="Fletcher C.F."/>
            <person name="Fukushima T."/>
            <person name="Furuno M."/>
            <person name="Futaki S."/>
            <person name="Gariboldi M."/>
            <person name="Georgii-Hemming P."/>
            <person name="Gingeras T.R."/>
            <person name="Gojobori T."/>
            <person name="Green R.E."/>
            <person name="Gustincich S."/>
            <person name="Harbers M."/>
            <person name="Hayashi Y."/>
            <person name="Hensch T.K."/>
            <person name="Hirokawa N."/>
            <person name="Hill D."/>
            <person name="Huminiecki L."/>
            <person name="Iacono M."/>
            <person name="Ikeo K."/>
            <person name="Iwama A."/>
            <person name="Ishikawa T."/>
            <person name="Jakt M."/>
            <person name="Kanapin A."/>
            <person name="Katoh M."/>
            <person name="Kawasawa Y."/>
            <person name="Kelso J."/>
            <person name="Kitamura H."/>
            <person name="Kitano H."/>
            <person name="Kollias G."/>
            <person name="Krishnan S.P."/>
            <person name="Kruger A."/>
            <person name="Kummerfeld S.K."/>
            <person name="Kurochkin I.V."/>
            <person name="Lareau L.F."/>
            <person name="Lazarevic D."/>
            <person name="Lipovich L."/>
            <person name="Liu J."/>
            <person name="Liuni S."/>
            <person name="McWilliam S."/>
            <person name="Madan Babu M."/>
            <person name="Madera M."/>
            <person name="Marchionni L."/>
            <person name="Matsuda H."/>
            <person name="Matsuzawa S."/>
            <person name="Miki H."/>
            <person name="Mignone F."/>
            <person name="Miyake S."/>
            <person name="Morris K."/>
            <person name="Mottagui-Tabar S."/>
            <person name="Mulder N."/>
            <person name="Nakano N."/>
            <person name="Nakauchi H."/>
            <person name="Ng P."/>
            <person name="Nilsson R."/>
            <person name="Nishiguchi S."/>
            <person name="Nishikawa S."/>
            <person name="Nori F."/>
            <person name="Ohara O."/>
            <person name="Okazaki Y."/>
            <person name="Orlando V."/>
            <person name="Pang K.C."/>
            <person name="Pavan W.J."/>
            <person name="Pavesi G."/>
            <person name="Pesole G."/>
            <person name="Petrovsky N."/>
            <person name="Piazza S."/>
            <person name="Reed J."/>
            <person name="Reid J.F."/>
            <person name="Ring B.Z."/>
            <person name="Ringwald M."/>
            <person name="Rost B."/>
            <person name="Ruan Y."/>
            <person name="Salzberg S.L."/>
            <person name="Sandelin A."/>
            <person name="Schneider C."/>
            <person name="Schoenbach C."/>
            <person name="Sekiguchi K."/>
            <person name="Semple C.A."/>
            <person name="Seno S."/>
            <person name="Sessa L."/>
            <person name="Sheng Y."/>
            <person name="Shibata Y."/>
            <person name="Shimada H."/>
            <person name="Shimada K."/>
            <person name="Silva D."/>
            <person name="Sinclair B."/>
            <person name="Sperling S."/>
            <person name="Stupka E."/>
            <person name="Sugiura K."/>
            <person name="Sultana R."/>
            <person name="Takenaka Y."/>
            <person name="Taki K."/>
            <person name="Tammoja K."/>
            <person name="Tan S.L."/>
            <person name="Tang S."/>
            <person name="Taylor M.S."/>
            <person name="Tegner J."/>
            <person name="Teichmann S.A."/>
            <person name="Ueda H.R."/>
            <person name="van Nimwegen E."/>
            <person name="Verardo R."/>
            <person name="Wei C.L."/>
            <person name="Yagi K."/>
            <person name="Yamanishi H."/>
            <person name="Zabarovsky E."/>
            <person name="Zhu S."/>
            <person name="Zimmer A."/>
            <person name="Hide W."/>
            <person name="Bult C."/>
            <person name="Grimmond S.M."/>
            <person name="Teasdale R.D."/>
            <person name="Liu E.T."/>
            <person name="Brusic V."/>
            <person name="Quackenbush J."/>
            <person name="Wahlestedt C."/>
            <person name="Mattick J.S."/>
            <person name="Hume D.A."/>
            <person name="Kai C."/>
            <person name="Sasaki D."/>
            <person name="Tomaru Y."/>
            <person name="Fukuda S."/>
            <person name="Kanamori-Katayama M."/>
            <person name="Suzuki M."/>
            <person name="Aoki J."/>
            <person name="Arakawa T."/>
            <person name="Iida J."/>
            <person name="Imamura K."/>
            <person name="Itoh M."/>
            <person name="Kato T."/>
            <person name="Kawaji H."/>
            <person name="Kawagashira N."/>
            <person name="Kawashima T."/>
            <person name="Kojima M."/>
            <person name="Kondo S."/>
            <person name="Konno H."/>
            <person name="Nakano K."/>
            <person name="Ninomiya N."/>
            <person name="Nishio T."/>
            <person name="Okada M."/>
            <person name="Plessy C."/>
            <person name="Shibata K."/>
            <person name="Shiraki T."/>
            <person name="Suzuki S."/>
            <person name="Tagami M."/>
            <person name="Waki K."/>
            <person name="Watahiki A."/>
            <person name="Okamura-Oho Y."/>
            <person name="Suzuki H."/>
            <person name="Kawai J."/>
            <person name="Hayashizaki Y."/>
        </authorList>
    </citation>
    <scope>NUCLEOTIDE SEQUENCE [LARGE SCALE MRNA] (ISOFORM 1)</scope>
    <source>
        <strain>C57BL/6J</strain>
        <strain>NOD</strain>
        <tissue>Heart</tissue>
        <tissue>Spleen</tissue>
    </source>
</reference>
<reference key="4">
    <citation type="journal article" date="2004" name="Genome Res.">
        <title>The status, quality, and expansion of the NIH full-length cDNA project: the Mammalian Gene Collection (MGC).</title>
        <authorList>
            <consortium name="The MGC Project Team"/>
        </authorList>
    </citation>
    <scope>NUCLEOTIDE SEQUENCE [LARGE SCALE MRNA] (ISOFORMS 1 AND 2)</scope>
    <source>
        <strain>C57BL/6J</strain>
        <strain>FVB/N</strain>
        <tissue>Brain</tissue>
        <tissue>Mammary tumor</tissue>
    </source>
</reference>
<accession>Q3UIW5</accession>
<accession>Q6PDS8</accession>
<accession>Q6ZQE8</accession>
<accession>Q91YZ9</accession>
<accession>Q9R0P0</accession>
<organism>
    <name type="scientific">Mus musculus</name>
    <name type="common">Mouse</name>
    <dbReference type="NCBI Taxonomy" id="10090"/>
    <lineage>
        <taxon>Eukaryota</taxon>
        <taxon>Metazoa</taxon>
        <taxon>Chordata</taxon>
        <taxon>Craniata</taxon>
        <taxon>Vertebrata</taxon>
        <taxon>Euteleostomi</taxon>
        <taxon>Mammalia</taxon>
        <taxon>Eutheria</taxon>
        <taxon>Euarchontoglires</taxon>
        <taxon>Glires</taxon>
        <taxon>Rodentia</taxon>
        <taxon>Myomorpha</taxon>
        <taxon>Muroidea</taxon>
        <taxon>Muridae</taxon>
        <taxon>Murinae</taxon>
        <taxon>Mus</taxon>
        <taxon>Mus</taxon>
    </lineage>
</organism>
<sequence length="804" mass="88345">MPQSSPSAAATASDMDKNSGSNSSSASSGSSKGQQPPRSASAGPAGESKPKSDGKNSNGSKRYNRKREPSYPKNENFSNQSRRSNSQKSKTFNKMPPQRGGGSSKPFSSSSNGGRRDEVAEAQRAEFSPAQFSGPKKINLNHLLNFTFEPRGQAGHFEGSGHGGWGKRNKWGHKPFNKELFLQANCQFVVSEDQDYAAHFADPDTLVNWDFVEQVRICSHEVPSCPICLYPPTAAKITRCGHIFCWACILHYLSLSEKTWSKCPICYSSVHKKDLKSVVATESRQYAVGDTITMQLMKREKGVLVALPKSKWVNVDHPINLGDEQLSQYSKLLLASKEQVLHRVVLEEKGALEQQLAEEKHTPESCFIEAAIQEVKIREEALSGVAGGGGEVTGVVAALEHLVLMAPLATESAFQPRKGVLEYLSAFDDEAAQVCSLDPPGPLALPLVEEEEAVSEPEACEDAEVADDSLGEGTVGPEMSQEEPITKPGFTQLSSSPCYYFYQAEDGQHMFLHPVNVRCLVREYGSLEQSPEKISATVVEIAGYSMSEDVRQRHRYLSHLPLTCEFSICELALQPPVVSKETLEMFSDDIEKRKRQRQKKAREERRRERRIEMEENKRQGRYPEVHIPLENLQQFPAFNSYTCPSDSALGPTSTEGHGALSLSPLSRSPGSHADFLLTPLSPTASQGSPSFCVGSLEDDSPFLSFAQMLRVGKAKADGWPKTAPKKDDNSLVPPAPVDSDGESDNSDRVPVPSFQNSFSQAIEAAFMKLDTPATSDPLSEDRGGKKRKRQKQKLLFSTSVVHTK</sequence>
<evidence type="ECO:0000250" key="1">
    <source>
        <dbReference type="UniProtKB" id="Q5XI59"/>
    </source>
</evidence>
<evidence type="ECO:0000250" key="2">
    <source>
        <dbReference type="UniProtKB" id="Q8N5U6"/>
    </source>
</evidence>
<evidence type="ECO:0000255" key="3">
    <source>
        <dbReference type="PROSITE-ProRule" id="PRU00175"/>
    </source>
</evidence>
<evidence type="ECO:0000256" key="4">
    <source>
        <dbReference type="SAM" id="MobiDB-lite"/>
    </source>
</evidence>
<evidence type="ECO:0000303" key="5">
    <source>
    </source>
</evidence>
<evidence type="ECO:0000303" key="6">
    <source>
    </source>
</evidence>
<evidence type="ECO:0000303" key="7">
    <source>
    </source>
</evidence>
<evidence type="ECO:0000305" key="8"/>
<evidence type="ECO:0000312" key="9">
    <source>
        <dbReference type="MGI" id="MGI:1859162"/>
    </source>
</evidence>
<protein>
    <recommendedName>
        <fullName evidence="8">E3 ubiquitin-protein ligase RNF10</fullName>
        <ecNumber evidence="2">2.3.2.27</ecNumber>
    </recommendedName>
    <alternativeName>
        <fullName>RING finger protein 10</fullName>
    </alternativeName>
    <alternativeName>
        <fullName>Sid 2705</fullName>
    </alternativeName>
</protein>
<dbReference type="EC" id="2.3.2.27" evidence="2"/>
<dbReference type="EMBL" id="AB026621">
    <property type="protein sequence ID" value="BAA84700.1"/>
    <property type="molecule type" value="mRNA"/>
</dbReference>
<dbReference type="EMBL" id="AK129106">
    <property type="protein sequence ID" value="BAC97916.1"/>
    <property type="status" value="ALT_INIT"/>
    <property type="molecule type" value="mRNA"/>
</dbReference>
<dbReference type="EMBL" id="AK146728">
    <property type="protein sequence ID" value="BAE27391.1"/>
    <property type="molecule type" value="mRNA"/>
</dbReference>
<dbReference type="EMBL" id="AK165617">
    <property type="protein sequence ID" value="BAE38297.1"/>
    <property type="molecule type" value="mRNA"/>
</dbReference>
<dbReference type="EMBL" id="AK168523">
    <property type="protein sequence ID" value="BAE40402.1"/>
    <property type="molecule type" value="mRNA"/>
</dbReference>
<dbReference type="EMBL" id="AK172065">
    <property type="protein sequence ID" value="BAE42807.1"/>
    <property type="molecule type" value="mRNA"/>
</dbReference>
<dbReference type="EMBL" id="BC010342">
    <property type="protein sequence ID" value="AAH10342.1"/>
    <property type="molecule type" value="mRNA"/>
</dbReference>
<dbReference type="EMBL" id="BC058527">
    <property type="protein sequence ID" value="AAH58527.1"/>
    <property type="molecule type" value="mRNA"/>
</dbReference>
<dbReference type="CCDS" id="CCDS19584.1">
    <molecule id="Q3UIW5-1"/>
</dbReference>
<dbReference type="RefSeq" id="NP_001289377.1">
    <property type="nucleotide sequence ID" value="NM_001302448.1"/>
</dbReference>
<dbReference type="RefSeq" id="NP_001289378.1">
    <property type="nucleotide sequence ID" value="NM_001302449.1"/>
</dbReference>
<dbReference type="RefSeq" id="NP_057907.2">
    <molecule id="Q3UIW5-1"/>
    <property type="nucleotide sequence ID" value="NM_016698.3"/>
</dbReference>
<dbReference type="BioGRID" id="206133">
    <property type="interactions" value="3"/>
</dbReference>
<dbReference type="FunCoup" id="Q3UIW5">
    <property type="interactions" value="2698"/>
</dbReference>
<dbReference type="IntAct" id="Q3UIW5">
    <property type="interactions" value="1"/>
</dbReference>
<dbReference type="STRING" id="10090.ENSMUSP00000107726"/>
<dbReference type="GlyGen" id="Q3UIW5">
    <property type="glycosylation" value="1 site"/>
</dbReference>
<dbReference type="iPTMnet" id="Q3UIW5"/>
<dbReference type="PhosphoSitePlus" id="Q3UIW5"/>
<dbReference type="PaxDb" id="10090-ENSMUSP00000107725"/>
<dbReference type="PeptideAtlas" id="Q3UIW5"/>
<dbReference type="ProteomicsDB" id="299853">
    <molecule id="Q3UIW5-1"/>
</dbReference>
<dbReference type="ProteomicsDB" id="299854">
    <molecule id="Q3UIW5-2"/>
</dbReference>
<dbReference type="Pumba" id="Q3UIW5"/>
<dbReference type="Antibodypedia" id="18977">
    <property type="antibodies" value="190 antibodies from 25 providers"/>
</dbReference>
<dbReference type="DNASU" id="50849"/>
<dbReference type="Ensembl" id="ENSMUST00000112096.9">
    <molecule id="Q3UIW5-1"/>
    <property type="protein sequence ID" value="ENSMUSP00000107725.3"/>
    <property type="gene ID" value="ENSMUSG00000041740.17"/>
</dbReference>
<dbReference type="GeneID" id="50849"/>
<dbReference type="KEGG" id="mmu:50849"/>
<dbReference type="UCSC" id="uc008zdl.2">
    <molecule id="Q3UIW5-1"/>
    <property type="organism name" value="mouse"/>
</dbReference>
<dbReference type="AGR" id="MGI:1859162"/>
<dbReference type="CTD" id="9921"/>
<dbReference type="MGI" id="MGI:1859162">
    <property type="gene designation" value="Rnf10"/>
</dbReference>
<dbReference type="VEuPathDB" id="HostDB:ENSMUSG00000041740"/>
<dbReference type="eggNOG" id="KOG2164">
    <property type="taxonomic scope" value="Eukaryota"/>
</dbReference>
<dbReference type="GeneTree" id="ENSGT00390000001731"/>
<dbReference type="InParanoid" id="Q3UIW5"/>
<dbReference type="OMA" id="PRWKKCP"/>
<dbReference type="OrthoDB" id="10064108at2759"/>
<dbReference type="TreeFam" id="TF323455"/>
<dbReference type="UniPathway" id="UPA00143"/>
<dbReference type="BioGRID-ORCS" id="50849">
    <property type="hits" value="7 hits in 78 CRISPR screens"/>
</dbReference>
<dbReference type="ChiTaRS" id="Rnf10">
    <property type="organism name" value="mouse"/>
</dbReference>
<dbReference type="PRO" id="PR:Q3UIW5"/>
<dbReference type="Proteomes" id="UP000000589">
    <property type="component" value="Chromosome 5"/>
</dbReference>
<dbReference type="RNAct" id="Q3UIW5">
    <property type="molecule type" value="protein"/>
</dbReference>
<dbReference type="Bgee" id="ENSMUSG00000041740">
    <property type="expression patterns" value="Expressed in blood and 266 other cell types or tissues"/>
</dbReference>
<dbReference type="ExpressionAtlas" id="Q3UIW5">
    <property type="expression patterns" value="baseline and differential"/>
</dbReference>
<dbReference type="GO" id="GO:0005737">
    <property type="term" value="C:cytoplasm"/>
    <property type="evidence" value="ECO:0007669"/>
    <property type="project" value="UniProtKB-SubCell"/>
</dbReference>
<dbReference type="GO" id="GO:0005634">
    <property type="term" value="C:nucleus"/>
    <property type="evidence" value="ECO:0000250"/>
    <property type="project" value="UniProtKB"/>
</dbReference>
<dbReference type="GO" id="GO:0000976">
    <property type="term" value="F:transcription cis-regulatory region binding"/>
    <property type="evidence" value="ECO:0000250"/>
    <property type="project" value="UniProtKB"/>
</dbReference>
<dbReference type="GO" id="GO:0061630">
    <property type="term" value="F:ubiquitin protein ligase activity"/>
    <property type="evidence" value="ECO:0000250"/>
    <property type="project" value="UniProtKB"/>
</dbReference>
<dbReference type="GO" id="GO:0008270">
    <property type="term" value="F:zinc ion binding"/>
    <property type="evidence" value="ECO:0007669"/>
    <property type="project" value="UniProtKB-KW"/>
</dbReference>
<dbReference type="GO" id="GO:0010626">
    <property type="term" value="P:negative regulation of Schwann cell proliferation"/>
    <property type="evidence" value="ECO:0000250"/>
    <property type="project" value="UniProtKB"/>
</dbReference>
<dbReference type="GO" id="GO:0031643">
    <property type="term" value="P:positive regulation of myelination"/>
    <property type="evidence" value="ECO:0000250"/>
    <property type="project" value="UniProtKB"/>
</dbReference>
<dbReference type="GO" id="GO:0045944">
    <property type="term" value="P:positive regulation of transcription by RNA polymerase II"/>
    <property type="evidence" value="ECO:0000250"/>
    <property type="project" value="UniProtKB"/>
</dbReference>
<dbReference type="GO" id="GO:0006513">
    <property type="term" value="P:protein monoubiquitination"/>
    <property type="evidence" value="ECO:0000250"/>
    <property type="project" value="UniProtKB"/>
</dbReference>
<dbReference type="GO" id="GO:1990116">
    <property type="term" value="P:ribosome-associated ubiquitin-dependent protein catabolic process"/>
    <property type="evidence" value="ECO:0000250"/>
    <property type="project" value="UniProtKB"/>
</dbReference>
<dbReference type="CDD" id="cd16536">
    <property type="entry name" value="RING-HC_RNF10"/>
    <property type="match status" value="1"/>
</dbReference>
<dbReference type="FunFam" id="3.30.40.10:FF:000112">
    <property type="entry name" value="RING finger protein 10"/>
    <property type="match status" value="1"/>
</dbReference>
<dbReference type="Gene3D" id="3.30.40.10">
    <property type="entry name" value="Zinc/RING finger domain, C3HC4 (zinc finger)"/>
    <property type="match status" value="1"/>
</dbReference>
<dbReference type="InterPro" id="IPR039739">
    <property type="entry name" value="MAG2/RNF10"/>
</dbReference>
<dbReference type="InterPro" id="IPR018957">
    <property type="entry name" value="Znf_C3HC4_RING-type"/>
</dbReference>
<dbReference type="InterPro" id="IPR001841">
    <property type="entry name" value="Znf_RING"/>
</dbReference>
<dbReference type="InterPro" id="IPR013083">
    <property type="entry name" value="Znf_RING/FYVE/PHD"/>
</dbReference>
<dbReference type="InterPro" id="IPR017907">
    <property type="entry name" value="Znf_RING_CS"/>
</dbReference>
<dbReference type="PANTHER" id="PTHR12983:SF9">
    <property type="entry name" value="E3 UBIQUITIN-PROTEIN LIGASE RNF10"/>
    <property type="match status" value="1"/>
</dbReference>
<dbReference type="PANTHER" id="PTHR12983">
    <property type="entry name" value="RING FINGER 10 FAMILY MEMBER"/>
    <property type="match status" value="1"/>
</dbReference>
<dbReference type="Pfam" id="PF00097">
    <property type="entry name" value="zf-C3HC4"/>
    <property type="match status" value="1"/>
</dbReference>
<dbReference type="SMART" id="SM00184">
    <property type="entry name" value="RING"/>
    <property type="match status" value="1"/>
</dbReference>
<dbReference type="SUPFAM" id="SSF57850">
    <property type="entry name" value="RING/U-box"/>
    <property type="match status" value="1"/>
</dbReference>
<dbReference type="PROSITE" id="PS00518">
    <property type="entry name" value="ZF_RING_1"/>
    <property type="match status" value="1"/>
</dbReference>
<dbReference type="PROSITE" id="PS50089">
    <property type="entry name" value="ZF_RING_2"/>
    <property type="match status" value="1"/>
</dbReference>
<keyword id="KW-0025">Alternative splicing</keyword>
<keyword id="KW-0963">Cytoplasm</keyword>
<keyword id="KW-0238">DNA-binding</keyword>
<keyword id="KW-0479">Metal-binding</keyword>
<keyword id="KW-0539">Nucleus</keyword>
<keyword id="KW-0597">Phosphoprotein</keyword>
<keyword id="KW-1185">Reference proteome</keyword>
<keyword id="KW-0804">Transcription</keyword>
<keyword id="KW-0805">Transcription regulation</keyword>
<keyword id="KW-0808">Transferase</keyword>
<keyword id="KW-0833">Ubl conjugation pathway</keyword>
<keyword id="KW-0862">Zinc</keyword>
<keyword id="KW-0863">Zinc-finger</keyword>
<feature type="chain" id="PRO_0000259586" description="E3 ubiquitin-protein ligase RNF10">
    <location>
        <begin position="1"/>
        <end position="804"/>
    </location>
</feature>
<feature type="zinc finger region" description="RING-type" evidence="3">
    <location>
        <begin position="225"/>
        <end position="267"/>
    </location>
</feature>
<feature type="region of interest" description="Disordered" evidence="4">
    <location>
        <begin position="1"/>
        <end position="134"/>
    </location>
</feature>
<feature type="region of interest" description="Disordered" evidence="4">
    <location>
        <begin position="589"/>
        <end position="611"/>
    </location>
</feature>
<feature type="region of interest" description="Disordered" evidence="4">
    <location>
        <begin position="646"/>
        <end position="665"/>
    </location>
</feature>
<feature type="region of interest" description="Disordered" evidence="4">
    <location>
        <begin position="715"/>
        <end position="804"/>
    </location>
</feature>
<feature type="compositionally biased region" description="Low complexity" evidence="4">
    <location>
        <begin position="1"/>
        <end position="31"/>
    </location>
</feature>
<feature type="compositionally biased region" description="Low complexity" evidence="4">
    <location>
        <begin position="78"/>
        <end position="90"/>
    </location>
</feature>
<feature type="compositionally biased region" description="Low complexity" evidence="4">
    <location>
        <begin position="104"/>
        <end position="113"/>
    </location>
</feature>
<feature type="compositionally biased region" description="Basic and acidic residues" evidence="4">
    <location>
        <begin position="114"/>
        <end position="124"/>
    </location>
</feature>
<feature type="compositionally biased region" description="Basic and acidic residues" evidence="4">
    <location>
        <begin position="601"/>
        <end position="611"/>
    </location>
</feature>
<feature type="compositionally biased region" description="Polar residues" evidence="4">
    <location>
        <begin position="646"/>
        <end position="655"/>
    </location>
</feature>
<feature type="compositionally biased region" description="Basic and acidic residues" evidence="4">
    <location>
        <begin position="715"/>
        <end position="729"/>
    </location>
</feature>
<feature type="compositionally biased region" description="Polar residues" evidence="4">
    <location>
        <begin position="795"/>
        <end position="804"/>
    </location>
</feature>
<feature type="modified residue" description="Phosphoserine" evidence="2">
    <location>
        <position position="5"/>
    </location>
</feature>
<feature type="modified residue" description="Phosphoserine" evidence="2">
    <location>
        <position position="110"/>
    </location>
</feature>
<feature type="modified residue" description="Phosphoserine" evidence="2">
    <location>
        <position position="128"/>
    </location>
</feature>
<feature type="splice variant" id="VSP_021479" description="In isoform 2." evidence="7">
    <location>
        <begin position="1"/>
        <end position="99"/>
    </location>
</feature>
<feature type="splice variant" id="VSP_021480" description="In isoform 2." evidence="7">
    <original>GGGSSKPF</original>
    <variation>MDKNSGSN</variation>
    <location>
        <begin position="100"/>
        <end position="107"/>
    </location>
</feature>
<feature type="splice variant" id="VSP_021481" description="In isoform 2." evidence="7">
    <location>
        <position position="780"/>
    </location>
</feature>
<feature type="sequence conflict" description="In Ref. 1; BAA84700." evidence="8" ref="1">
    <original>QRQ</original>
    <variation>PTK</variation>
    <location>
        <begin position="596"/>
        <end position="598"/>
    </location>
</feature>
<feature type="sequence conflict" description="In Ref. 1; BAA84700." evidence="8" ref="1">
    <original>LS</original>
    <variation>YP</variation>
    <location>
        <begin position="660"/>
        <end position="661"/>
    </location>
</feature>
<name>RNF10_MOUSE</name>